<reference key="1">
    <citation type="journal article" date="2004" name="Proc. Natl. Acad. Sci. U.S.A.">
        <title>Insights into the evolution of Yersinia pestis through whole-genome comparison with Yersinia pseudotuberculosis.</title>
        <authorList>
            <person name="Chain P.S.G."/>
            <person name="Carniel E."/>
            <person name="Larimer F.W."/>
            <person name="Lamerdin J."/>
            <person name="Stoutland P.O."/>
            <person name="Regala W.M."/>
            <person name="Georgescu A.M."/>
            <person name="Vergez L.M."/>
            <person name="Land M.L."/>
            <person name="Motin V.L."/>
            <person name="Brubaker R.R."/>
            <person name="Fowler J."/>
            <person name="Hinnebusch J."/>
            <person name="Marceau M."/>
            <person name="Medigue C."/>
            <person name="Simonet M."/>
            <person name="Chenal-Francisque V."/>
            <person name="Souza B."/>
            <person name="Dacheux D."/>
            <person name="Elliott J.M."/>
            <person name="Derbise A."/>
            <person name="Hauser L.J."/>
            <person name="Garcia E."/>
        </authorList>
    </citation>
    <scope>NUCLEOTIDE SEQUENCE [LARGE SCALE GENOMIC DNA]</scope>
    <source>
        <strain>IP32953</strain>
    </source>
</reference>
<proteinExistence type="inferred from homology"/>
<feature type="chain" id="PRO_1000008187" description="Thiamine-phosphate synthase">
    <location>
        <begin position="1"/>
        <end position="215"/>
    </location>
</feature>
<feature type="binding site" evidence="1">
    <location>
        <begin position="37"/>
        <end position="41"/>
    </location>
    <ligand>
        <name>4-amino-2-methyl-5-(diphosphooxymethyl)pyrimidine</name>
        <dbReference type="ChEBI" id="CHEBI:57841"/>
    </ligand>
</feature>
<feature type="binding site" evidence="1">
    <location>
        <position position="69"/>
    </location>
    <ligand>
        <name>4-amino-2-methyl-5-(diphosphooxymethyl)pyrimidine</name>
        <dbReference type="ChEBI" id="CHEBI:57841"/>
    </ligand>
</feature>
<feature type="binding site" evidence="1">
    <location>
        <position position="70"/>
    </location>
    <ligand>
        <name>Mg(2+)</name>
        <dbReference type="ChEBI" id="CHEBI:18420"/>
    </ligand>
</feature>
<feature type="binding site" evidence="1">
    <location>
        <position position="89"/>
    </location>
    <ligand>
        <name>Mg(2+)</name>
        <dbReference type="ChEBI" id="CHEBI:18420"/>
    </ligand>
</feature>
<feature type="binding site" evidence="1">
    <location>
        <position position="108"/>
    </location>
    <ligand>
        <name>4-amino-2-methyl-5-(diphosphooxymethyl)pyrimidine</name>
        <dbReference type="ChEBI" id="CHEBI:57841"/>
    </ligand>
</feature>
<feature type="binding site" evidence="1">
    <location>
        <begin position="134"/>
        <end position="136"/>
    </location>
    <ligand>
        <name>2-[(2R,5Z)-2-carboxy-4-methylthiazol-5(2H)-ylidene]ethyl phosphate</name>
        <dbReference type="ChEBI" id="CHEBI:62899"/>
    </ligand>
</feature>
<feature type="binding site" evidence="1">
    <location>
        <position position="137"/>
    </location>
    <ligand>
        <name>4-amino-2-methyl-5-(diphosphooxymethyl)pyrimidine</name>
        <dbReference type="ChEBI" id="CHEBI:57841"/>
    </ligand>
</feature>
<feature type="binding site" evidence="1">
    <location>
        <position position="166"/>
    </location>
    <ligand>
        <name>2-[(2R,5Z)-2-carboxy-4-methylthiazol-5(2H)-ylidene]ethyl phosphate</name>
        <dbReference type="ChEBI" id="CHEBI:62899"/>
    </ligand>
</feature>
<feature type="binding site" evidence="1">
    <location>
        <begin position="186"/>
        <end position="187"/>
    </location>
    <ligand>
        <name>2-[(2R,5Z)-2-carboxy-4-methylthiazol-5(2H)-ylidene]ethyl phosphate</name>
        <dbReference type="ChEBI" id="CHEBI:62899"/>
    </ligand>
</feature>
<comment type="function">
    <text evidence="1">Condenses 4-methyl-5-(beta-hydroxyethyl)thiazole monophosphate (THZ-P) and 2-methyl-4-amino-5-hydroxymethyl pyrimidine pyrophosphate (HMP-PP) to form thiamine monophosphate (TMP).</text>
</comment>
<comment type="catalytic activity">
    <reaction evidence="1">
        <text>2-[(2R,5Z)-2-carboxy-4-methylthiazol-5(2H)-ylidene]ethyl phosphate + 4-amino-2-methyl-5-(diphosphooxymethyl)pyrimidine + 2 H(+) = thiamine phosphate + CO2 + diphosphate</text>
        <dbReference type="Rhea" id="RHEA:47844"/>
        <dbReference type="ChEBI" id="CHEBI:15378"/>
        <dbReference type="ChEBI" id="CHEBI:16526"/>
        <dbReference type="ChEBI" id="CHEBI:33019"/>
        <dbReference type="ChEBI" id="CHEBI:37575"/>
        <dbReference type="ChEBI" id="CHEBI:57841"/>
        <dbReference type="ChEBI" id="CHEBI:62899"/>
        <dbReference type="EC" id="2.5.1.3"/>
    </reaction>
</comment>
<comment type="catalytic activity">
    <reaction evidence="1">
        <text>2-(2-carboxy-4-methylthiazol-5-yl)ethyl phosphate + 4-amino-2-methyl-5-(diphosphooxymethyl)pyrimidine + 2 H(+) = thiamine phosphate + CO2 + diphosphate</text>
        <dbReference type="Rhea" id="RHEA:47848"/>
        <dbReference type="ChEBI" id="CHEBI:15378"/>
        <dbReference type="ChEBI" id="CHEBI:16526"/>
        <dbReference type="ChEBI" id="CHEBI:33019"/>
        <dbReference type="ChEBI" id="CHEBI:37575"/>
        <dbReference type="ChEBI" id="CHEBI:57841"/>
        <dbReference type="ChEBI" id="CHEBI:62890"/>
        <dbReference type="EC" id="2.5.1.3"/>
    </reaction>
</comment>
<comment type="catalytic activity">
    <reaction evidence="1">
        <text>4-methyl-5-(2-phosphooxyethyl)-thiazole + 4-amino-2-methyl-5-(diphosphooxymethyl)pyrimidine + H(+) = thiamine phosphate + diphosphate</text>
        <dbReference type="Rhea" id="RHEA:22328"/>
        <dbReference type="ChEBI" id="CHEBI:15378"/>
        <dbReference type="ChEBI" id="CHEBI:33019"/>
        <dbReference type="ChEBI" id="CHEBI:37575"/>
        <dbReference type="ChEBI" id="CHEBI:57841"/>
        <dbReference type="ChEBI" id="CHEBI:58296"/>
        <dbReference type="EC" id="2.5.1.3"/>
    </reaction>
</comment>
<comment type="cofactor">
    <cofactor evidence="1">
        <name>Mg(2+)</name>
        <dbReference type="ChEBI" id="CHEBI:18420"/>
    </cofactor>
    <text evidence="1">Binds 1 Mg(2+) ion per subunit.</text>
</comment>
<comment type="pathway">
    <text evidence="1">Cofactor biosynthesis; thiamine diphosphate biosynthesis; thiamine phosphate from 4-amino-2-methyl-5-diphosphomethylpyrimidine and 4-methyl-5-(2-phosphoethyl)-thiazole: step 1/1.</text>
</comment>
<comment type="similarity">
    <text evidence="1">Belongs to the thiamine-phosphate synthase family.</text>
</comment>
<organism>
    <name type="scientific">Yersinia pseudotuberculosis serotype I (strain IP32953)</name>
    <dbReference type="NCBI Taxonomy" id="273123"/>
    <lineage>
        <taxon>Bacteria</taxon>
        <taxon>Pseudomonadati</taxon>
        <taxon>Pseudomonadota</taxon>
        <taxon>Gammaproteobacteria</taxon>
        <taxon>Enterobacterales</taxon>
        <taxon>Yersiniaceae</taxon>
        <taxon>Yersinia</taxon>
    </lineage>
</organism>
<dbReference type="EC" id="2.5.1.3" evidence="1"/>
<dbReference type="EMBL" id="BX936398">
    <property type="protein sequence ID" value="CAH19529.1"/>
    <property type="molecule type" value="Genomic_DNA"/>
</dbReference>
<dbReference type="SMR" id="Q66FP6"/>
<dbReference type="KEGG" id="yps:YPTB0289"/>
<dbReference type="UniPathway" id="UPA00060">
    <property type="reaction ID" value="UER00141"/>
</dbReference>
<dbReference type="Proteomes" id="UP000001011">
    <property type="component" value="Chromosome"/>
</dbReference>
<dbReference type="GO" id="GO:0005737">
    <property type="term" value="C:cytoplasm"/>
    <property type="evidence" value="ECO:0007669"/>
    <property type="project" value="TreeGrafter"/>
</dbReference>
<dbReference type="GO" id="GO:0000287">
    <property type="term" value="F:magnesium ion binding"/>
    <property type="evidence" value="ECO:0007669"/>
    <property type="project" value="UniProtKB-UniRule"/>
</dbReference>
<dbReference type="GO" id="GO:0004789">
    <property type="term" value="F:thiamine-phosphate diphosphorylase activity"/>
    <property type="evidence" value="ECO:0007669"/>
    <property type="project" value="UniProtKB-UniRule"/>
</dbReference>
<dbReference type="GO" id="GO:0009228">
    <property type="term" value="P:thiamine biosynthetic process"/>
    <property type="evidence" value="ECO:0007669"/>
    <property type="project" value="UniProtKB-KW"/>
</dbReference>
<dbReference type="GO" id="GO:0009229">
    <property type="term" value="P:thiamine diphosphate biosynthetic process"/>
    <property type="evidence" value="ECO:0007669"/>
    <property type="project" value="UniProtKB-UniRule"/>
</dbReference>
<dbReference type="CDD" id="cd00564">
    <property type="entry name" value="TMP_TenI"/>
    <property type="match status" value="1"/>
</dbReference>
<dbReference type="FunFam" id="3.20.20.70:FF:000064">
    <property type="entry name" value="Thiamine-phosphate synthase"/>
    <property type="match status" value="1"/>
</dbReference>
<dbReference type="Gene3D" id="3.20.20.70">
    <property type="entry name" value="Aldolase class I"/>
    <property type="match status" value="1"/>
</dbReference>
<dbReference type="HAMAP" id="MF_00097">
    <property type="entry name" value="TMP_synthase"/>
    <property type="match status" value="1"/>
</dbReference>
<dbReference type="InterPro" id="IPR013785">
    <property type="entry name" value="Aldolase_TIM"/>
</dbReference>
<dbReference type="InterPro" id="IPR036206">
    <property type="entry name" value="ThiamineP_synth_sf"/>
</dbReference>
<dbReference type="InterPro" id="IPR022998">
    <property type="entry name" value="ThiamineP_synth_TenI"/>
</dbReference>
<dbReference type="InterPro" id="IPR034291">
    <property type="entry name" value="TMP_synthase"/>
</dbReference>
<dbReference type="NCBIfam" id="NF002904">
    <property type="entry name" value="PRK03512.1"/>
    <property type="match status" value="1"/>
</dbReference>
<dbReference type="NCBIfam" id="TIGR00693">
    <property type="entry name" value="thiE"/>
    <property type="match status" value="1"/>
</dbReference>
<dbReference type="PANTHER" id="PTHR20857">
    <property type="entry name" value="THIAMINE-PHOSPHATE PYROPHOSPHORYLASE"/>
    <property type="match status" value="1"/>
</dbReference>
<dbReference type="PANTHER" id="PTHR20857:SF15">
    <property type="entry name" value="THIAMINE-PHOSPHATE SYNTHASE"/>
    <property type="match status" value="1"/>
</dbReference>
<dbReference type="Pfam" id="PF02581">
    <property type="entry name" value="TMP-TENI"/>
    <property type="match status" value="1"/>
</dbReference>
<dbReference type="SUPFAM" id="SSF51391">
    <property type="entry name" value="Thiamin phosphate synthase"/>
    <property type="match status" value="1"/>
</dbReference>
<gene>
    <name evidence="1" type="primary">thiE</name>
    <name type="ordered locus">YPTB0289</name>
</gene>
<sequence length="215" mass="23305">MATPGFPSTEQRLGLYPVVDSLLWIERLLAAGVTTLQLRIKNADDAQVEQDIVAAIELGKRYQARLFINDYWQLAVKHGAYGVHLGQEDLETADLAAIQQAGLRLGISTHDEHELAVAKTLRPSYIALGHIFPTQTKQMPSSPQGLASLSRQVKNTPDYPTVAIGGISIERVPHVLATGVGSVAVVSAITLASDWQRATAQLLHLIEGKELADEK</sequence>
<keyword id="KW-0460">Magnesium</keyword>
<keyword id="KW-0479">Metal-binding</keyword>
<keyword id="KW-0784">Thiamine biosynthesis</keyword>
<keyword id="KW-0808">Transferase</keyword>
<evidence type="ECO:0000255" key="1">
    <source>
        <dbReference type="HAMAP-Rule" id="MF_00097"/>
    </source>
</evidence>
<accession>Q66FP6</accession>
<protein>
    <recommendedName>
        <fullName evidence="1">Thiamine-phosphate synthase</fullName>
        <shortName evidence="1">TP synthase</shortName>
        <shortName evidence="1">TPS</shortName>
        <ecNumber evidence="1">2.5.1.3</ecNumber>
    </recommendedName>
    <alternativeName>
        <fullName evidence="1">Thiamine-phosphate pyrophosphorylase</fullName>
        <shortName evidence="1">TMP pyrophosphorylase</shortName>
        <shortName evidence="1">TMP-PPase</shortName>
    </alternativeName>
</protein>
<name>THIE_YERPS</name>